<evidence type="ECO:0000250" key="1"/>
<evidence type="ECO:0000305" key="2"/>
<reference key="1">
    <citation type="journal article" date="1995" name="Gene">
        <title>Characterization of the succinate dehydrogenase-encoding gene cluster (sdh) from the rickettsia Coxiella burnetii.</title>
        <authorList>
            <person name="Heinzen R.A."/>
            <person name="Mo Y.-Y."/>
            <person name="Robertson S.J."/>
            <person name="Mallavia L.P."/>
        </authorList>
    </citation>
    <scope>NUCLEOTIDE SEQUENCE [GENOMIC DNA]</scope>
    <source>
        <strain>Nine Mile</strain>
    </source>
</reference>
<reference key="2">
    <citation type="journal article" date="2003" name="Proc. Natl. Acad. Sci. U.S.A.">
        <title>Complete genome sequence of the Q-fever pathogen, Coxiella burnetii.</title>
        <authorList>
            <person name="Seshadri R."/>
            <person name="Paulsen I.T."/>
            <person name="Eisen J.A."/>
            <person name="Read T.D."/>
            <person name="Nelson K.E."/>
            <person name="Nelson W.C."/>
            <person name="Ward N.L."/>
            <person name="Tettelin H."/>
            <person name="Davidsen T.M."/>
            <person name="Beanan M.J."/>
            <person name="DeBoy R.T."/>
            <person name="Daugherty S.C."/>
            <person name="Brinkac L.M."/>
            <person name="Madupu R."/>
            <person name="Dodson R.J."/>
            <person name="Khouri H.M."/>
            <person name="Lee K.H."/>
            <person name="Carty H.A."/>
            <person name="Scanlan D."/>
            <person name="Heinzen R.A."/>
            <person name="Thompson H.A."/>
            <person name="Samuel J.E."/>
            <person name="Fraser C.M."/>
            <person name="Heidelberg J.F."/>
        </authorList>
    </citation>
    <scope>NUCLEOTIDE SEQUENCE [LARGE SCALE GENOMIC DNA]</scope>
    <source>
        <strain>RSA 493 / Nine Mile phase I</strain>
    </source>
</reference>
<proteinExistence type="inferred from homology"/>
<feature type="chain" id="PRO_0000203509" description="Succinate dehydrogenase cytochrome b556 subunit">
    <location>
        <begin position="1"/>
        <end position="125"/>
    </location>
</feature>
<feature type="topological domain" description="Cytoplasmic" evidence="1">
    <location>
        <begin position="1"/>
        <end position="22"/>
    </location>
</feature>
<feature type="transmembrane region" description="Helical" evidence="1">
    <location>
        <begin position="23"/>
        <end position="48"/>
    </location>
</feature>
<feature type="topological domain" description="Periplasmic" evidence="1">
    <location>
        <begin position="49"/>
        <end position="65"/>
    </location>
</feature>
<feature type="transmembrane region" description="Helical" evidence="1">
    <location>
        <begin position="66"/>
        <end position="86"/>
    </location>
</feature>
<feature type="topological domain" description="Cytoplasmic" evidence="1">
    <location>
        <begin position="87"/>
        <end position="104"/>
    </location>
</feature>
<feature type="transmembrane region" description="Helical" evidence="1">
    <location>
        <begin position="105"/>
        <end position="125"/>
    </location>
</feature>
<feature type="binding site" description="axial binding residue" evidence="1">
    <location>
        <position position="81"/>
    </location>
    <ligand>
        <name>heme</name>
        <dbReference type="ChEBI" id="CHEBI:30413"/>
        <note>ligand shared with second transmembrane subunit</note>
    </ligand>
    <ligandPart>
        <name>Fe</name>
        <dbReference type="ChEBI" id="CHEBI:18248"/>
    </ligandPart>
</feature>
<organism>
    <name type="scientific">Coxiella burnetii (strain RSA 493 / Nine Mile phase I)</name>
    <dbReference type="NCBI Taxonomy" id="227377"/>
    <lineage>
        <taxon>Bacteria</taxon>
        <taxon>Pseudomonadati</taxon>
        <taxon>Pseudomonadota</taxon>
        <taxon>Gammaproteobacteria</taxon>
        <taxon>Legionellales</taxon>
        <taxon>Coxiellaceae</taxon>
        <taxon>Coxiella</taxon>
    </lineage>
</organism>
<keyword id="KW-0997">Cell inner membrane</keyword>
<keyword id="KW-1003">Cell membrane</keyword>
<keyword id="KW-0249">Electron transport</keyword>
<keyword id="KW-0349">Heme</keyword>
<keyword id="KW-0408">Iron</keyword>
<keyword id="KW-0472">Membrane</keyword>
<keyword id="KW-0479">Metal-binding</keyword>
<keyword id="KW-1185">Reference proteome</keyword>
<keyword id="KW-0812">Transmembrane</keyword>
<keyword id="KW-1133">Transmembrane helix</keyword>
<keyword id="KW-0813">Transport</keyword>
<keyword id="KW-0816">Tricarboxylic acid cycle</keyword>
<comment type="function">
    <text>Membrane-anchoring subunit of succinate dehydrogenase (SDH).</text>
</comment>
<comment type="cofactor">
    <cofactor evidence="1">
        <name>heme</name>
        <dbReference type="ChEBI" id="CHEBI:30413"/>
    </cofactor>
    <text evidence="1">The heme is bound between the two transmembrane subunits.</text>
</comment>
<comment type="pathway">
    <text>Carbohydrate metabolism; tricarboxylic acid cycle.</text>
</comment>
<comment type="subunit">
    <text evidence="1">Part of an enzyme complex containing four subunits: a flavoprotein, an iron-sulfur protein, plus two membrane-anchoring proteins, SdhC and SdhD. The complex can form homotrimers (By similarity).</text>
</comment>
<comment type="subcellular location">
    <subcellularLocation>
        <location>Cell inner membrane</location>
        <topology>Multi-pass membrane protein</topology>
    </subcellularLocation>
</comment>
<comment type="similarity">
    <text evidence="2">Belongs to the cytochrome b560 family.</text>
</comment>
<comment type="sequence caution" evidence="2">
    <conflict type="erroneous initiation">
        <sequence resource="EMBL-CDS" id="AAO90902"/>
    </conflict>
</comment>
<sequence length="125" mass="14311">MNAKRPVNLDLTKFHFPPMAILSIGHRISGFVLFLCMPLMFYLLHRATASAESFYHLHQLLLHNGWIKLAVWIMLSATLFHLFAGIRHLAMDLGFWESVPEGRISAYTVFVVSFIAIVLAGVWIW</sequence>
<name>DHSC_COXBU</name>
<gene>
    <name type="primary">sdhC</name>
    <name type="ordered locus">CBU_1403</name>
</gene>
<protein>
    <recommendedName>
        <fullName>Succinate dehydrogenase cytochrome b556 subunit</fullName>
        <shortName>Cytochrome b-556</shortName>
    </recommendedName>
</protein>
<accession>P51055</accession>
<dbReference type="EMBL" id="L33409">
    <property type="protein sequence ID" value="AAA74131.1"/>
    <property type="molecule type" value="Genomic_DNA"/>
</dbReference>
<dbReference type="EMBL" id="AE016828">
    <property type="protein sequence ID" value="AAO90902.2"/>
    <property type="status" value="ALT_INIT"/>
    <property type="molecule type" value="Genomic_DNA"/>
</dbReference>
<dbReference type="PIR" id="I40847">
    <property type="entry name" value="I40847"/>
</dbReference>
<dbReference type="RefSeq" id="NP_820388.2">
    <property type="nucleotide sequence ID" value="NC_002971.3"/>
</dbReference>
<dbReference type="SMR" id="P51055"/>
<dbReference type="STRING" id="227377.CBU_1403"/>
<dbReference type="EnsemblBacteria" id="AAO90902">
    <property type="protein sequence ID" value="AAO90902"/>
    <property type="gene ID" value="CBU_1403"/>
</dbReference>
<dbReference type="GeneID" id="1209309"/>
<dbReference type="KEGG" id="cbu:CBU_1403"/>
<dbReference type="PATRIC" id="fig|227377.7.peg.1405"/>
<dbReference type="eggNOG" id="COG2009">
    <property type="taxonomic scope" value="Bacteria"/>
</dbReference>
<dbReference type="HOGENOM" id="CLU_094691_2_1_6"/>
<dbReference type="OrthoDB" id="9799441at2"/>
<dbReference type="UniPathway" id="UPA00223"/>
<dbReference type="Proteomes" id="UP000002671">
    <property type="component" value="Chromosome"/>
</dbReference>
<dbReference type="GO" id="GO:0005886">
    <property type="term" value="C:plasma membrane"/>
    <property type="evidence" value="ECO:0000318"/>
    <property type="project" value="GO_Central"/>
</dbReference>
<dbReference type="GO" id="GO:0009055">
    <property type="term" value="F:electron transfer activity"/>
    <property type="evidence" value="ECO:0007669"/>
    <property type="project" value="InterPro"/>
</dbReference>
<dbReference type="GO" id="GO:0046872">
    <property type="term" value="F:metal ion binding"/>
    <property type="evidence" value="ECO:0007669"/>
    <property type="project" value="UniProtKB-KW"/>
</dbReference>
<dbReference type="GO" id="GO:0006099">
    <property type="term" value="P:tricarboxylic acid cycle"/>
    <property type="evidence" value="ECO:0007669"/>
    <property type="project" value="UniProtKB-UniPathway"/>
</dbReference>
<dbReference type="CDD" id="cd03499">
    <property type="entry name" value="SQR_TypeC_SdhC"/>
    <property type="match status" value="1"/>
</dbReference>
<dbReference type="FunFam" id="1.20.1300.10:FF:000005">
    <property type="entry name" value="Succinate dehydrogenase cytochrome b556 subunit"/>
    <property type="match status" value="1"/>
</dbReference>
<dbReference type="Gene3D" id="1.20.1300.10">
    <property type="entry name" value="Fumarate reductase/succinate dehydrogenase, transmembrane subunit"/>
    <property type="match status" value="1"/>
</dbReference>
<dbReference type="InterPro" id="IPR034804">
    <property type="entry name" value="SQR/QFR_C/D"/>
</dbReference>
<dbReference type="InterPro" id="IPR018495">
    <property type="entry name" value="Succ_DH_cyt_bsu_CS"/>
</dbReference>
<dbReference type="InterPro" id="IPR014314">
    <property type="entry name" value="Succ_DH_cytb556"/>
</dbReference>
<dbReference type="InterPro" id="IPR000701">
    <property type="entry name" value="SuccDH_FuR_B_TM-su"/>
</dbReference>
<dbReference type="NCBIfam" id="TIGR02970">
    <property type="entry name" value="succ_dehyd_cytB"/>
    <property type="match status" value="1"/>
</dbReference>
<dbReference type="PANTHER" id="PTHR10978">
    <property type="entry name" value="SUCCINATE DEHYDROGENASE CYTOCHROME B560 SUBUNIT"/>
    <property type="match status" value="1"/>
</dbReference>
<dbReference type="PANTHER" id="PTHR10978:SF5">
    <property type="entry name" value="SUCCINATE DEHYDROGENASE CYTOCHROME B560 SUBUNIT, MITOCHONDRIAL"/>
    <property type="match status" value="1"/>
</dbReference>
<dbReference type="Pfam" id="PF01127">
    <property type="entry name" value="Sdh_cyt"/>
    <property type="match status" value="1"/>
</dbReference>
<dbReference type="PIRSF" id="PIRSF000178">
    <property type="entry name" value="SDH_cyt_b560"/>
    <property type="match status" value="1"/>
</dbReference>
<dbReference type="SUPFAM" id="SSF81343">
    <property type="entry name" value="Fumarate reductase respiratory complex transmembrane subunits"/>
    <property type="match status" value="1"/>
</dbReference>
<dbReference type="PROSITE" id="PS01000">
    <property type="entry name" value="SDH_CYT_1"/>
    <property type="match status" value="1"/>
</dbReference>
<dbReference type="PROSITE" id="PS01001">
    <property type="entry name" value="SDH_CYT_2"/>
    <property type="match status" value="1"/>
</dbReference>